<reference key="1">
    <citation type="submission" date="2004-12" db="EMBL/GenBank/DDBJ databases">
        <title>A superfamily of membrane-associated DHHC type zinc finger proteins.</title>
        <authorList>
            <person name="Chen Y."/>
            <person name="Huang C.-H."/>
        </authorList>
    </citation>
    <scope>NUCLEOTIDE SEQUENCE [MRNA]</scope>
</reference>
<proteinExistence type="evidence at transcript level"/>
<comment type="function">
    <text evidence="3 4">Palmitoyltransferase that catalyzes the addition of palmitate onto various protein substrates such as CTNND2, CD36, GSDMD, NLRP3, NOD1, NOD2, STAT3 and S1PR1 thus plays a role in various biological processes including cell adhesion, inflammation, fatty acid uptake, bacterial sensing or cardiac functions. Plays an important role in the regulation of synapse efficacy by mediating palmitoylation of delta-catenin/CTNND2, thereby increasing synaptic delivery and surface stabilization of alpha-amino-3-hydroxy-5-methyl-4-isoxazole propionic acid receptors (AMPARs). Under basal conditions, remains at the synaptic membrane through FYN-mediated phosphorylation that prevents association with endocytic proteins. Neuronal activity enhances the internalization and trafficking of DHHC5 from spines to dendritic shafts where it palmitoylates delta-catenin/CTNND2. Regulates cell adhesion at the plasma membrane by palmitoylating GOLGA7B and DSG2. Plays a role in innate immune response by mediating the palmitoylation of NOD1 and NOD2 and their proper recruitment to the bacterial entry site and phagosomes. Also participates in fatty acid uptake by palmitoylating CD36 and thereby targeting it to the plasma membrane. Upon binding of fatty acids to CD36, gets phosphorylated by LYN leading to inactivation and subsequent CD36 caveolar endocytosis (By similarity). Controls oligodendrocyte development by catalyzing STAT3 palmitoylation (By similarity). Acts as a regulator of inflammatory response by mediating palmitoylation of NLRP3 and GSDMD. Palmitoylates NLRP3 to promote inflammasome assembly and activation. Activates pyroptosis by catalyzing palmitoylation of gasdermin-D (GSDMD), thereby promoting membrane translocation and pore formation of GSDMD (By similarity).</text>
</comment>
<comment type="catalytic activity">
    <reaction evidence="3">
        <text>L-cysteinyl-[protein] + hexadecanoyl-CoA = S-hexadecanoyl-L-cysteinyl-[protein] + CoA</text>
        <dbReference type="Rhea" id="RHEA:36683"/>
        <dbReference type="Rhea" id="RHEA-COMP:10131"/>
        <dbReference type="Rhea" id="RHEA-COMP:11032"/>
        <dbReference type="ChEBI" id="CHEBI:29950"/>
        <dbReference type="ChEBI" id="CHEBI:57287"/>
        <dbReference type="ChEBI" id="CHEBI:57379"/>
        <dbReference type="ChEBI" id="CHEBI:74151"/>
        <dbReference type="EC" id="2.3.1.225"/>
    </reaction>
    <physiologicalReaction direction="left-to-right" evidence="3">
        <dbReference type="Rhea" id="RHEA:36684"/>
    </physiologicalReaction>
</comment>
<comment type="subcellular location">
    <subcellularLocation>
        <location evidence="3">Cell membrane</location>
        <topology evidence="5">Multi-pass membrane protein</topology>
    </subcellularLocation>
</comment>
<comment type="domain">
    <text evidence="2">The DHHC domain is required for palmitoyltransferase activity.</text>
</comment>
<comment type="PTM">
    <text evidence="4">Phosphorylation regulates association with endocytic proteins and its subcellular localization. Phosphorylation by LYN during fatty acid uptake leads to inactivation of the activity.</text>
</comment>
<comment type="PTM">
    <text evidence="1 4">Autopalmitoylated (By similarity). Palmitoylation of the C-terminal tail regulates stimulation-dependent plasma membrane motility (By similarity).</text>
</comment>
<comment type="similarity">
    <text evidence="8">Belongs to the DHHC palmitoyltransferase family. ERF2/ZDHHC9 subfamily.</text>
</comment>
<name>ZDHC5_CANLF</name>
<evidence type="ECO:0000250" key="1">
    <source>
        <dbReference type="UniProtKB" id="Q2THW7"/>
    </source>
</evidence>
<evidence type="ECO:0000250" key="2">
    <source>
        <dbReference type="UniProtKB" id="Q8IUH5"/>
    </source>
</evidence>
<evidence type="ECO:0000250" key="3">
    <source>
        <dbReference type="UniProtKB" id="Q8VDZ4"/>
    </source>
</evidence>
<evidence type="ECO:0000250" key="4">
    <source>
        <dbReference type="UniProtKB" id="Q9C0B5"/>
    </source>
</evidence>
<evidence type="ECO:0000255" key="5"/>
<evidence type="ECO:0000255" key="6">
    <source>
        <dbReference type="PROSITE-ProRule" id="PRU00067"/>
    </source>
</evidence>
<evidence type="ECO:0000256" key="7">
    <source>
        <dbReference type="SAM" id="MobiDB-lite"/>
    </source>
</evidence>
<evidence type="ECO:0000305" key="8"/>
<sequence length="715" mass="77385">MPAESGKRFKPSKYVPVSAAAIFLVGATTLFFAFTCPGLSLCVSPAVPIYNAIVFLFVLANFSMATFMDPGIFPRAEEDEDKEDDFRAPLYKTVEIKGIQVRMKWCATCRFYRPPRCSHCSVCDNCVEEFDHHCPWVNNCIGRRNYRYFFLFLLSLTAHIMGVFGFGLLYVLYHMEELSGVRTAVTMAVMCVAGLFFIPVAGLTGFHVVLVARGRTTNEQVTGKFRGGVNPFTNGCCNNVSRVLCSSPAPRYLGRPKKEKTIVIRPPFLRPEVSDGQITVKIMDNGIQGELRRSKSKGSLEVTESQSADAEPPPPPKPDLSRYTGLRTHLTLAANEDSSLLGKDSPPTPTMYKYRPGYSSSSTSAAMPHSSSAKLSRGDSLKEPTSIAESSRHPSYRSEPSLEPESFRSPTFGKSFHFDPLSSGSRSSSLKSAQGTGFELGQLQSIRSEGTTSTSYKSLANQTRNGSLSYDSLLTPSDSPDFESVQAGPEPDPPLGYTSPFLSARLAQQREAERHPRLVPTGPTHREPSPVRYDNLSRHIVASLQEREKLLRQSPPLPGREEEPGLGDSGIQSTPGSGHAPRTSSSSDDSKRSPLVKTPLGRPAAPRFGKPDGLRGRGLGSPEPGPTAPYLGRSMSYSSQKAPAGVSEAEEVALQPLLTPKDEVQLKTAYSKSNGQPKSIGSASPGPGQQPLSSPTRGGVKKVSGVGGTTYEISV</sequence>
<accession>Q2THW9</accession>
<organism>
    <name type="scientific">Canis lupus familiaris</name>
    <name type="common">Dog</name>
    <name type="synonym">Canis familiaris</name>
    <dbReference type="NCBI Taxonomy" id="9615"/>
    <lineage>
        <taxon>Eukaryota</taxon>
        <taxon>Metazoa</taxon>
        <taxon>Chordata</taxon>
        <taxon>Craniata</taxon>
        <taxon>Vertebrata</taxon>
        <taxon>Euteleostomi</taxon>
        <taxon>Mammalia</taxon>
        <taxon>Eutheria</taxon>
        <taxon>Laurasiatheria</taxon>
        <taxon>Carnivora</taxon>
        <taxon>Caniformia</taxon>
        <taxon>Canidae</taxon>
        <taxon>Canis</taxon>
    </lineage>
</organism>
<feature type="chain" id="PRO_0000269228" description="Palmitoyltransferase ZDHHC5">
    <location>
        <begin position="1"/>
        <end position="715"/>
    </location>
</feature>
<feature type="topological domain" description="Cytoplasmic" evidence="5">
    <location>
        <begin position="1"/>
        <end position="13"/>
    </location>
</feature>
<feature type="transmembrane region" description="Helical" evidence="5">
    <location>
        <begin position="14"/>
        <end position="34"/>
    </location>
</feature>
<feature type="topological domain" description="Extracellular" evidence="5">
    <location>
        <begin position="35"/>
        <end position="38"/>
    </location>
</feature>
<feature type="transmembrane region" description="Helical" evidence="5">
    <location>
        <begin position="39"/>
        <end position="59"/>
    </location>
</feature>
<feature type="topological domain" description="Cytoplasmic" evidence="5">
    <location>
        <begin position="60"/>
        <end position="148"/>
    </location>
</feature>
<feature type="transmembrane region" description="Helical" evidence="5">
    <location>
        <begin position="149"/>
        <end position="169"/>
    </location>
</feature>
<feature type="topological domain" description="Extracellular" evidence="5">
    <location>
        <begin position="170"/>
        <end position="191"/>
    </location>
</feature>
<feature type="transmembrane region" description="Helical" evidence="5">
    <location>
        <begin position="192"/>
        <end position="212"/>
    </location>
</feature>
<feature type="topological domain" description="Cytoplasmic" evidence="5">
    <location>
        <begin position="213"/>
        <end position="715"/>
    </location>
</feature>
<feature type="domain" description="DHHC" evidence="6">
    <location>
        <begin position="104"/>
        <end position="154"/>
    </location>
</feature>
<feature type="region of interest" description="Disordered" evidence="7">
    <location>
        <begin position="289"/>
        <end position="648"/>
    </location>
</feature>
<feature type="region of interest" description="Disordered" evidence="7">
    <location>
        <begin position="666"/>
        <end position="715"/>
    </location>
</feature>
<feature type="compositionally biased region" description="Low complexity" evidence="7">
    <location>
        <begin position="359"/>
        <end position="373"/>
    </location>
</feature>
<feature type="compositionally biased region" description="Low complexity" evidence="7">
    <location>
        <begin position="422"/>
        <end position="432"/>
    </location>
</feature>
<feature type="compositionally biased region" description="Polar residues" evidence="7">
    <location>
        <begin position="442"/>
        <end position="478"/>
    </location>
</feature>
<feature type="compositionally biased region" description="Polar residues" evidence="7">
    <location>
        <begin position="668"/>
        <end position="679"/>
    </location>
</feature>
<feature type="compositionally biased region" description="Low complexity" evidence="7">
    <location>
        <begin position="681"/>
        <end position="695"/>
    </location>
</feature>
<feature type="active site" description="S-palmitoyl cysteine intermediate" evidence="3">
    <location>
        <position position="134"/>
    </location>
</feature>
<feature type="modified residue" description="Phosphotyrosine" evidence="3">
    <location>
        <position position="91"/>
    </location>
</feature>
<feature type="modified residue" description="Phosphoserine" evidence="4">
    <location>
        <position position="247"/>
    </location>
</feature>
<feature type="modified residue" description="Phosphoserine" evidence="4">
    <location>
        <position position="296"/>
    </location>
</feature>
<feature type="modified residue" description="Phosphoserine" evidence="4">
    <location>
        <position position="299"/>
    </location>
</feature>
<feature type="modified residue" description="Phosphothreonine" evidence="3">
    <location>
        <position position="303"/>
    </location>
</feature>
<feature type="modified residue" description="Phosphoserine" evidence="4">
    <location>
        <position position="345"/>
    </location>
</feature>
<feature type="modified residue" description="Phosphothreonine" evidence="4">
    <location>
        <position position="348"/>
    </location>
</feature>
<feature type="modified residue" description="Phosphothreonine" evidence="3">
    <location>
        <position position="350"/>
    </location>
</feature>
<feature type="modified residue" description="Phosphoserine" evidence="4">
    <location>
        <position position="380"/>
    </location>
</feature>
<feature type="modified residue" description="Phosphoserine" evidence="4">
    <location>
        <position position="398"/>
    </location>
</feature>
<feature type="modified residue" description="Phosphoserine" evidence="4">
    <location>
        <position position="406"/>
    </location>
</feature>
<feature type="modified residue" description="Phosphoserine" evidence="4">
    <location>
        <position position="409"/>
    </location>
</feature>
<feature type="modified residue" description="Phosphothreonine" evidence="4">
    <location>
        <position position="411"/>
    </location>
</feature>
<feature type="modified residue" description="Phosphoserine" evidence="4">
    <location>
        <position position="415"/>
    </location>
</feature>
<feature type="modified residue" description="Phosphoserine" evidence="4">
    <location>
        <position position="425"/>
    </location>
</feature>
<feature type="modified residue" description="Phosphoserine" evidence="3">
    <location>
        <position position="429"/>
    </location>
</feature>
<feature type="modified residue" description="Phosphoserine" evidence="4">
    <location>
        <position position="432"/>
    </location>
</feature>
<feature type="modified residue" description="Phosphothreonine" evidence="4">
    <location>
        <position position="436"/>
    </location>
</feature>
<feature type="modified residue" description="Phosphoserine" evidence="4">
    <location>
        <position position="529"/>
    </location>
</feature>
<feature type="modified residue" description="Phosphoserine" evidence="4">
    <location>
        <position position="554"/>
    </location>
</feature>
<feature type="modified residue" description="Omega-N-methylarginine" evidence="4">
    <location>
        <position position="617"/>
    </location>
</feature>
<feature type="modified residue" description="Phosphoserine" evidence="4">
    <location>
        <position position="621"/>
    </location>
</feature>
<feature type="modified residue" description="Phosphothreonine" evidence="4">
    <location>
        <position position="659"/>
    </location>
</feature>
<feature type="modified residue" description="Phosphoserine" evidence="4">
    <location>
        <position position="684"/>
    </location>
</feature>
<feature type="modified residue" description="Phosphoserine" evidence="4">
    <location>
        <position position="694"/>
    </location>
</feature>
<feature type="modified residue" description="Omega-N-methylarginine" evidence="3">
    <location>
        <position position="697"/>
    </location>
</feature>
<dbReference type="EC" id="2.3.1.225" evidence="3"/>
<dbReference type="EMBL" id="AY871201">
    <property type="protein sequence ID" value="AAX68534.1"/>
    <property type="molecule type" value="mRNA"/>
</dbReference>
<dbReference type="RefSeq" id="NP_001041570.1">
    <property type="nucleotide sequence ID" value="NM_001048105.1"/>
</dbReference>
<dbReference type="RefSeq" id="XP_005631102.1">
    <property type="nucleotide sequence ID" value="XM_005631045.2"/>
</dbReference>
<dbReference type="RefSeq" id="XP_038279348.1">
    <property type="nucleotide sequence ID" value="XM_038423420.1"/>
</dbReference>
<dbReference type="RefSeq" id="XP_038279349.1">
    <property type="nucleotide sequence ID" value="XM_038423421.1"/>
</dbReference>
<dbReference type="SMR" id="Q2THW9"/>
<dbReference type="BioGRID" id="149209">
    <property type="interactions" value="1"/>
</dbReference>
<dbReference type="FunCoup" id="Q2THW9">
    <property type="interactions" value="912"/>
</dbReference>
<dbReference type="STRING" id="9615.ENSCAFP00000011554"/>
<dbReference type="PaxDb" id="9615-ENSCAFP00000011554"/>
<dbReference type="Ensembl" id="ENSCAFT00000012470.5">
    <property type="protein sequence ID" value="ENSCAFP00000011554.4"/>
    <property type="gene ID" value="ENSCAFG00000042658.2"/>
</dbReference>
<dbReference type="Ensembl" id="ENSCAFT00030010279.1">
    <property type="protein sequence ID" value="ENSCAFP00030009005.1"/>
    <property type="gene ID" value="ENSCAFG00030005614.1"/>
</dbReference>
<dbReference type="Ensembl" id="ENSCAFT00040025881.1">
    <property type="protein sequence ID" value="ENSCAFP00040022510.1"/>
    <property type="gene ID" value="ENSCAFG00040013996.1"/>
</dbReference>
<dbReference type="Ensembl" id="ENSCAFT00845035969.1">
    <property type="protein sequence ID" value="ENSCAFP00845028149.1"/>
    <property type="gene ID" value="ENSCAFG00845020408.1"/>
</dbReference>
<dbReference type="GeneID" id="483490"/>
<dbReference type="KEGG" id="cfa:483490"/>
<dbReference type="CTD" id="25921"/>
<dbReference type="VEuPathDB" id="HostDB:ENSCAFG00845020408"/>
<dbReference type="GeneTree" id="ENSGT00940000156001"/>
<dbReference type="InParanoid" id="Q2THW9"/>
<dbReference type="OrthoDB" id="4096362at2759"/>
<dbReference type="Proteomes" id="UP000002254">
    <property type="component" value="Chromosome 18"/>
</dbReference>
<dbReference type="Proteomes" id="UP000694429">
    <property type="component" value="Chromosome 18"/>
</dbReference>
<dbReference type="Proteomes" id="UP000694542">
    <property type="component" value="Chromosome 18"/>
</dbReference>
<dbReference type="Proteomes" id="UP000805418">
    <property type="component" value="Chromosome 18"/>
</dbReference>
<dbReference type="Bgee" id="ENSCAFG00000042658">
    <property type="expression patterns" value="Expressed in nose and 45 other cell types or tissues"/>
</dbReference>
<dbReference type="GO" id="GO:0030425">
    <property type="term" value="C:dendrite"/>
    <property type="evidence" value="ECO:0007669"/>
    <property type="project" value="Ensembl"/>
</dbReference>
<dbReference type="GO" id="GO:0098978">
    <property type="term" value="C:glutamatergic synapse"/>
    <property type="evidence" value="ECO:0007669"/>
    <property type="project" value="Ensembl"/>
</dbReference>
<dbReference type="GO" id="GO:0005654">
    <property type="term" value="C:nucleoplasm"/>
    <property type="evidence" value="ECO:0007669"/>
    <property type="project" value="Ensembl"/>
</dbReference>
<dbReference type="GO" id="GO:0045335">
    <property type="term" value="C:phagocytic vesicle"/>
    <property type="evidence" value="ECO:0007669"/>
    <property type="project" value="Ensembl"/>
</dbReference>
<dbReference type="GO" id="GO:0005886">
    <property type="term" value="C:plasma membrane"/>
    <property type="evidence" value="ECO:0000318"/>
    <property type="project" value="GO_Central"/>
</dbReference>
<dbReference type="GO" id="GO:0098794">
    <property type="term" value="C:postsynapse"/>
    <property type="evidence" value="ECO:0007669"/>
    <property type="project" value="Ensembl"/>
</dbReference>
<dbReference type="GO" id="GO:0016409">
    <property type="term" value="F:palmitoyltransferase activity"/>
    <property type="evidence" value="ECO:0000318"/>
    <property type="project" value="GO_Central"/>
</dbReference>
<dbReference type="GO" id="GO:0019706">
    <property type="term" value="F:protein-cysteine S-palmitoyltransferase activity"/>
    <property type="evidence" value="ECO:0000250"/>
    <property type="project" value="UniProtKB"/>
</dbReference>
<dbReference type="GO" id="GO:0045087">
    <property type="term" value="P:innate immune response"/>
    <property type="evidence" value="ECO:0007669"/>
    <property type="project" value="UniProtKB-KW"/>
</dbReference>
<dbReference type="GO" id="GO:0006869">
    <property type="term" value="P:lipid transport"/>
    <property type="evidence" value="ECO:0007669"/>
    <property type="project" value="UniProtKB-KW"/>
</dbReference>
<dbReference type="GO" id="GO:1900227">
    <property type="term" value="P:positive regulation of NLRP3 inflammasome complex assembly"/>
    <property type="evidence" value="ECO:0007669"/>
    <property type="project" value="Ensembl"/>
</dbReference>
<dbReference type="GO" id="GO:0062208">
    <property type="term" value="P:positive regulation of pattern recognition receptor signaling pathway"/>
    <property type="evidence" value="ECO:0000318"/>
    <property type="project" value="GO_Central"/>
</dbReference>
<dbReference type="GO" id="GO:1905171">
    <property type="term" value="P:positive regulation of protein localization to phagocytic vesicle"/>
    <property type="evidence" value="ECO:0007669"/>
    <property type="project" value="Ensembl"/>
</dbReference>
<dbReference type="GO" id="GO:1903078">
    <property type="term" value="P:positive regulation of protein localization to plasma membrane"/>
    <property type="evidence" value="ECO:0007669"/>
    <property type="project" value="Ensembl"/>
</dbReference>
<dbReference type="GO" id="GO:0140639">
    <property type="term" value="P:positive regulation of pyroptotic inflammatory response"/>
    <property type="evidence" value="ECO:0000250"/>
    <property type="project" value="UniProtKB"/>
</dbReference>
<dbReference type="GO" id="GO:0072659">
    <property type="term" value="P:protein localization to plasma membrane"/>
    <property type="evidence" value="ECO:0007669"/>
    <property type="project" value="Ensembl"/>
</dbReference>
<dbReference type="InterPro" id="IPR001594">
    <property type="entry name" value="Palmitoyltrfase_DHHC"/>
</dbReference>
<dbReference type="PANTHER" id="PTHR12349">
    <property type="entry name" value="ANKYRIN REPEAT AND LEM DOMAIN-CONTAINING PROTEIN 2"/>
    <property type="match status" value="1"/>
</dbReference>
<dbReference type="PANTHER" id="PTHR12349:SF3">
    <property type="entry name" value="PALMITOYLTRANSFERASE ZDHHC5"/>
    <property type="match status" value="1"/>
</dbReference>
<dbReference type="Pfam" id="PF01529">
    <property type="entry name" value="DHHC"/>
    <property type="match status" value="1"/>
</dbReference>
<dbReference type="PROSITE" id="PS50216">
    <property type="entry name" value="DHHC"/>
    <property type="match status" value="1"/>
</dbReference>
<gene>
    <name type="primary">ZDHHC5</name>
</gene>
<protein>
    <recommendedName>
        <fullName>Palmitoyltransferase ZDHHC5</fullName>
        <ecNumber evidence="3">2.3.1.225</ecNumber>
    </recommendedName>
    <alternativeName>
        <fullName>Zinc finger DHHC domain-containing protein 5</fullName>
        <shortName>DHHC-5</shortName>
    </alternativeName>
</protein>
<keyword id="KW-0012">Acyltransferase</keyword>
<keyword id="KW-1003">Cell membrane</keyword>
<keyword id="KW-0391">Immunity</keyword>
<keyword id="KW-0399">Innate immunity</keyword>
<keyword id="KW-0445">Lipid transport</keyword>
<keyword id="KW-0449">Lipoprotein</keyword>
<keyword id="KW-0472">Membrane</keyword>
<keyword id="KW-0488">Methylation</keyword>
<keyword id="KW-0564">Palmitate</keyword>
<keyword id="KW-0597">Phosphoprotein</keyword>
<keyword id="KW-1185">Reference proteome</keyword>
<keyword id="KW-0808">Transferase</keyword>
<keyword id="KW-0812">Transmembrane</keyword>
<keyword id="KW-1133">Transmembrane helix</keyword>
<keyword id="KW-0813">Transport</keyword>